<feature type="chain" id="PRO_0000124402" description="Small ribosomal subunit protein uS7">
    <location>
        <begin position="1"/>
        <end position="188"/>
    </location>
</feature>
<evidence type="ECO:0000255" key="1">
    <source>
        <dbReference type="HAMAP-Rule" id="MF_00480"/>
    </source>
</evidence>
<evidence type="ECO:0000305" key="2"/>
<protein>
    <recommendedName>
        <fullName evidence="1">Small ribosomal subunit protein uS7</fullName>
    </recommendedName>
    <alternativeName>
        <fullName evidence="2">30S ribosomal protein S7</fullName>
    </alternativeName>
</protein>
<keyword id="KW-1185">Reference proteome</keyword>
<keyword id="KW-0687">Ribonucleoprotein</keyword>
<keyword id="KW-0689">Ribosomal protein</keyword>
<keyword id="KW-0694">RNA-binding</keyword>
<keyword id="KW-0699">rRNA-binding</keyword>
<accession>Q6LXI3</accession>
<comment type="function">
    <text evidence="1">One of the primary rRNA binding proteins, it binds directly to 16S rRNA where it nucleates assembly of the head domain of the 30S subunit. Is located at the subunit interface close to the decoding center.</text>
</comment>
<comment type="subunit">
    <text evidence="1">Part of the 30S ribosomal subunit.</text>
</comment>
<comment type="similarity">
    <text evidence="1">Belongs to the universal ribosomal protein uS7 family.</text>
</comment>
<organism>
    <name type="scientific">Methanococcus maripaludis (strain DSM 14266 / JCM 13030 / NBRC 101832 / S2 / LL)</name>
    <dbReference type="NCBI Taxonomy" id="267377"/>
    <lineage>
        <taxon>Archaea</taxon>
        <taxon>Methanobacteriati</taxon>
        <taxon>Methanobacteriota</taxon>
        <taxon>Methanomada group</taxon>
        <taxon>Methanococci</taxon>
        <taxon>Methanococcales</taxon>
        <taxon>Methanococcaceae</taxon>
        <taxon>Methanococcus</taxon>
    </lineage>
</organism>
<reference key="1">
    <citation type="journal article" date="2004" name="J. Bacteriol.">
        <title>Complete genome sequence of the genetically tractable hydrogenotrophic methanogen Methanococcus maripaludis.</title>
        <authorList>
            <person name="Hendrickson E.L."/>
            <person name="Kaul R."/>
            <person name="Zhou Y."/>
            <person name="Bovee D."/>
            <person name="Chapman P."/>
            <person name="Chung J."/>
            <person name="Conway de Macario E."/>
            <person name="Dodsworth J.A."/>
            <person name="Gillett W."/>
            <person name="Graham D.E."/>
            <person name="Hackett M."/>
            <person name="Haydock A.K."/>
            <person name="Kang A."/>
            <person name="Land M.L."/>
            <person name="Levy R."/>
            <person name="Lie T.J."/>
            <person name="Major T.A."/>
            <person name="Moore B.C."/>
            <person name="Porat I."/>
            <person name="Palmeiri A."/>
            <person name="Rouse G."/>
            <person name="Saenphimmachak C."/>
            <person name="Soell D."/>
            <person name="Van Dien S."/>
            <person name="Wang T."/>
            <person name="Whitman W.B."/>
            <person name="Xia Q."/>
            <person name="Zhang Y."/>
            <person name="Larimer F.W."/>
            <person name="Olson M.V."/>
            <person name="Leigh J.A."/>
        </authorList>
    </citation>
    <scope>NUCLEOTIDE SEQUENCE [LARGE SCALE GENOMIC DNA]</scope>
    <source>
        <strain>DSM 14266 / JCM 13030 / NBRC 101832 / S2 / LL</strain>
    </source>
</reference>
<gene>
    <name evidence="1" type="primary">rps7</name>
    <name type="ordered locus">MMP1368</name>
</gene>
<proteinExistence type="inferred from homology"/>
<dbReference type="EMBL" id="BX950229">
    <property type="protein sequence ID" value="CAF30924.1"/>
    <property type="molecule type" value="Genomic_DNA"/>
</dbReference>
<dbReference type="RefSeq" id="WP_011171312.1">
    <property type="nucleotide sequence ID" value="NC_005791.1"/>
</dbReference>
<dbReference type="SMR" id="Q6LXI3"/>
<dbReference type="STRING" id="267377.MMP1368"/>
<dbReference type="EnsemblBacteria" id="CAF30924">
    <property type="protein sequence ID" value="CAF30924"/>
    <property type="gene ID" value="MMP1368"/>
</dbReference>
<dbReference type="GeneID" id="2762300"/>
<dbReference type="KEGG" id="mmp:MMP1368"/>
<dbReference type="PATRIC" id="fig|267377.15.peg.1403"/>
<dbReference type="eggNOG" id="arCOG04254">
    <property type="taxonomic scope" value="Archaea"/>
</dbReference>
<dbReference type="HOGENOM" id="CLU_063975_0_0_2"/>
<dbReference type="OrthoDB" id="45346at2157"/>
<dbReference type="Proteomes" id="UP000000590">
    <property type="component" value="Chromosome"/>
</dbReference>
<dbReference type="GO" id="GO:0015935">
    <property type="term" value="C:small ribosomal subunit"/>
    <property type="evidence" value="ECO:0007669"/>
    <property type="project" value="InterPro"/>
</dbReference>
<dbReference type="GO" id="GO:0019843">
    <property type="term" value="F:rRNA binding"/>
    <property type="evidence" value="ECO:0007669"/>
    <property type="project" value="UniProtKB-UniRule"/>
</dbReference>
<dbReference type="GO" id="GO:0003735">
    <property type="term" value="F:structural constituent of ribosome"/>
    <property type="evidence" value="ECO:0007669"/>
    <property type="project" value="InterPro"/>
</dbReference>
<dbReference type="GO" id="GO:0006412">
    <property type="term" value="P:translation"/>
    <property type="evidence" value="ECO:0007669"/>
    <property type="project" value="UniProtKB-UniRule"/>
</dbReference>
<dbReference type="CDD" id="cd14867">
    <property type="entry name" value="uS7_Eukaryote"/>
    <property type="match status" value="1"/>
</dbReference>
<dbReference type="Gene3D" id="1.10.455.10">
    <property type="entry name" value="Ribosomal protein S7 domain"/>
    <property type="match status" value="1"/>
</dbReference>
<dbReference type="HAMAP" id="MF_00480_A">
    <property type="entry name" value="Ribosomal_uS7_A"/>
    <property type="match status" value="1"/>
</dbReference>
<dbReference type="InterPro" id="IPR000235">
    <property type="entry name" value="Ribosomal_uS7"/>
</dbReference>
<dbReference type="InterPro" id="IPR026018">
    <property type="entry name" value="Ribosomal_uS7_arc"/>
</dbReference>
<dbReference type="InterPro" id="IPR020606">
    <property type="entry name" value="Ribosomal_uS7_CS"/>
</dbReference>
<dbReference type="InterPro" id="IPR023798">
    <property type="entry name" value="Ribosomal_uS7_dom"/>
</dbReference>
<dbReference type="InterPro" id="IPR036823">
    <property type="entry name" value="Ribosomal_uS7_dom_sf"/>
</dbReference>
<dbReference type="InterPro" id="IPR005716">
    <property type="entry name" value="Ribosomal_uS7_euk/arc"/>
</dbReference>
<dbReference type="NCBIfam" id="NF003106">
    <property type="entry name" value="PRK04027.1"/>
    <property type="match status" value="1"/>
</dbReference>
<dbReference type="NCBIfam" id="TIGR01028">
    <property type="entry name" value="uS7_euk_arch"/>
    <property type="match status" value="1"/>
</dbReference>
<dbReference type="PANTHER" id="PTHR11205">
    <property type="entry name" value="RIBOSOMAL PROTEIN S7"/>
    <property type="match status" value="1"/>
</dbReference>
<dbReference type="Pfam" id="PF00177">
    <property type="entry name" value="Ribosomal_S7"/>
    <property type="match status" value="1"/>
</dbReference>
<dbReference type="PIRSF" id="PIRSF002122">
    <property type="entry name" value="RPS7p_RPS7a_RPS5e_RPS7o"/>
    <property type="match status" value="1"/>
</dbReference>
<dbReference type="SUPFAM" id="SSF47973">
    <property type="entry name" value="Ribosomal protein S7"/>
    <property type="match status" value="1"/>
</dbReference>
<dbReference type="PROSITE" id="PS00052">
    <property type="entry name" value="RIBOSOMAL_S7"/>
    <property type="match status" value="1"/>
</dbReference>
<name>RS7_METMP</name>
<sequence>MEIKLFGKWDSETVAVKDPSLKSYISVAPVLVPHTAGRNSKKSFDKSKMNIVERLANKLMANQNNTGKKHETLAIVEEALTIIENRTKENPVQVLVDALENSGPREETTRISYGGIAFLQSVDVSPSRRLDTAFRNIALGASESAHKNKKTVAQCLADELIFASKADMQKSFAVKKKEEKERVAQSAR</sequence>